<feature type="chain" id="PRO_1000066388" description="Carbamoyl phosphate synthase large chain">
    <location>
        <begin position="1"/>
        <end position="1059"/>
    </location>
</feature>
<feature type="domain" description="ATP-grasp 1" evidence="1">
    <location>
        <begin position="133"/>
        <end position="327"/>
    </location>
</feature>
<feature type="domain" description="ATP-grasp 2" evidence="1">
    <location>
        <begin position="671"/>
        <end position="861"/>
    </location>
</feature>
<feature type="domain" description="MGS-like" evidence="1">
    <location>
        <begin position="930"/>
        <end position="1059"/>
    </location>
</feature>
<feature type="region of interest" description="Carboxyphosphate synthetic domain" evidence="1">
    <location>
        <begin position="1"/>
        <end position="401"/>
    </location>
</feature>
<feature type="region of interest" description="Oligomerization domain" evidence="1">
    <location>
        <begin position="402"/>
        <end position="546"/>
    </location>
</feature>
<feature type="region of interest" description="Carbamoyl phosphate synthetic domain" evidence="1">
    <location>
        <begin position="547"/>
        <end position="929"/>
    </location>
</feature>
<feature type="region of interest" description="Allosteric domain" evidence="1">
    <location>
        <begin position="930"/>
        <end position="1059"/>
    </location>
</feature>
<feature type="binding site" evidence="1">
    <location>
        <position position="129"/>
    </location>
    <ligand>
        <name>ATP</name>
        <dbReference type="ChEBI" id="CHEBI:30616"/>
        <label>1</label>
    </ligand>
</feature>
<feature type="binding site" evidence="1">
    <location>
        <position position="169"/>
    </location>
    <ligand>
        <name>ATP</name>
        <dbReference type="ChEBI" id="CHEBI:30616"/>
        <label>1</label>
    </ligand>
</feature>
<feature type="binding site" evidence="1">
    <location>
        <position position="175"/>
    </location>
    <ligand>
        <name>ATP</name>
        <dbReference type="ChEBI" id="CHEBI:30616"/>
        <label>1</label>
    </ligand>
</feature>
<feature type="binding site" evidence="1">
    <location>
        <position position="176"/>
    </location>
    <ligand>
        <name>ATP</name>
        <dbReference type="ChEBI" id="CHEBI:30616"/>
        <label>1</label>
    </ligand>
</feature>
<feature type="binding site" evidence="1">
    <location>
        <position position="208"/>
    </location>
    <ligand>
        <name>ATP</name>
        <dbReference type="ChEBI" id="CHEBI:30616"/>
        <label>1</label>
    </ligand>
</feature>
<feature type="binding site" evidence="1">
    <location>
        <position position="210"/>
    </location>
    <ligand>
        <name>ATP</name>
        <dbReference type="ChEBI" id="CHEBI:30616"/>
        <label>1</label>
    </ligand>
</feature>
<feature type="binding site" evidence="1">
    <location>
        <position position="215"/>
    </location>
    <ligand>
        <name>ATP</name>
        <dbReference type="ChEBI" id="CHEBI:30616"/>
        <label>1</label>
    </ligand>
</feature>
<feature type="binding site" evidence="1">
    <location>
        <position position="241"/>
    </location>
    <ligand>
        <name>ATP</name>
        <dbReference type="ChEBI" id="CHEBI:30616"/>
        <label>1</label>
    </ligand>
</feature>
<feature type="binding site" evidence="1">
    <location>
        <position position="242"/>
    </location>
    <ligand>
        <name>ATP</name>
        <dbReference type="ChEBI" id="CHEBI:30616"/>
        <label>1</label>
    </ligand>
</feature>
<feature type="binding site" evidence="1">
    <location>
        <position position="243"/>
    </location>
    <ligand>
        <name>ATP</name>
        <dbReference type="ChEBI" id="CHEBI:30616"/>
        <label>1</label>
    </ligand>
</feature>
<feature type="binding site" evidence="1">
    <location>
        <position position="284"/>
    </location>
    <ligand>
        <name>ATP</name>
        <dbReference type="ChEBI" id="CHEBI:30616"/>
        <label>1</label>
    </ligand>
</feature>
<feature type="binding site" evidence="1">
    <location>
        <position position="284"/>
    </location>
    <ligand>
        <name>Mg(2+)</name>
        <dbReference type="ChEBI" id="CHEBI:18420"/>
        <label>1</label>
    </ligand>
</feature>
<feature type="binding site" evidence="1">
    <location>
        <position position="284"/>
    </location>
    <ligand>
        <name>Mn(2+)</name>
        <dbReference type="ChEBI" id="CHEBI:29035"/>
        <label>1</label>
    </ligand>
</feature>
<feature type="binding site" evidence="1">
    <location>
        <position position="298"/>
    </location>
    <ligand>
        <name>ATP</name>
        <dbReference type="ChEBI" id="CHEBI:30616"/>
        <label>1</label>
    </ligand>
</feature>
<feature type="binding site" evidence="1">
    <location>
        <position position="298"/>
    </location>
    <ligand>
        <name>Mg(2+)</name>
        <dbReference type="ChEBI" id="CHEBI:18420"/>
        <label>1</label>
    </ligand>
</feature>
<feature type="binding site" evidence="1">
    <location>
        <position position="298"/>
    </location>
    <ligand>
        <name>Mg(2+)</name>
        <dbReference type="ChEBI" id="CHEBI:18420"/>
        <label>2</label>
    </ligand>
</feature>
<feature type="binding site" evidence="1">
    <location>
        <position position="298"/>
    </location>
    <ligand>
        <name>Mn(2+)</name>
        <dbReference type="ChEBI" id="CHEBI:29035"/>
        <label>1</label>
    </ligand>
</feature>
<feature type="binding site" evidence="1">
    <location>
        <position position="298"/>
    </location>
    <ligand>
        <name>Mn(2+)</name>
        <dbReference type="ChEBI" id="CHEBI:29035"/>
        <label>2</label>
    </ligand>
</feature>
<feature type="binding site" evidence="1">
    <location>
        <position position="300"/>
    </location>
    <ligand>
        <name>Mg(2+)</name>
        <dbReference type="ChEBI" id="CHEBI:18420"/>
        <label>2</label>
    </ligand>
</feature>
<feature type="binding site" evidence="1">
    <location>
        <position position="300"/>
    </location>
    <ligand>
        <name>Mn(2+)</name>
        <dbReference type="ChEBI" id="CHEBI:29035"/>
        <label>2</label>
    </ligand>
</feature>
<feature type="binding site" evidence="1">
    <location>
        <position position="707"/>
    </location>
    <ligand>
        <name>ATP</name>
        <dbReference type="ChEBI" id="CHEBI:30616"/>
        <label>2</label>
    </ligand>
</feature>
<feature type="binding site" evidence="1">
    <location>
        <position position="746"/>
    </location>
    <ligand>
        <name>ATP</name>
        <dbReference type="ChEBI" id="CHEBI:30616"/>
        <label>2</label>
    </ligand>
</feature>
<feature type="binding site" evidence="1">
    <location>
        <position position="748"/>
    </location>
    <ligand>
        <name>ATP</name>
        <dbReference type="ChEBI" id="CHEBI:30616"/>
        <label>2</label>
    </ligand>
</feature>
<feature type="binding site" evidence="1">
    <location>
        <position position="752"/>
    </location>
    <ligand>
        <name>ATP</name>
        <dbReference type="ChEBI" id="CHEBI:30616"/>
        <label>2</label>
    </ligand>
</feature>
<feature type="binding site" evidence="1">
    <location>
        <position position="777"/>
    </location>
    <ligand>
        <name>ATP</name>
        <dbReference type="ChEBI" id="CHEBI:30616"/>
        <label>2</label>
    </ligand>
</feature>
<feature type="binding site" evidence="1">
    <location>
        <position position="778"/>
    </location>
    <ligand>
        <name>ATP</name>
        <dbReference type="ChEBI" id="CHEBI:30616"/>
        <label>2</label>
    </ligand>
</feature>
<feature type="binding site" evidence="1">
    <location>
        <position position="779"/>
    </location>
    <ligand>
        <name>ATP</name>
        <dbReference type="ChEBI" id="CHEBI:30616"/>
        <label>2</label>
    </ligand>
</feature>
<feature type="binding site" evidence="1">
    <location>
        <position position="780"/>
    </location>
    <ligand>
        <name>ATP</name>
        <dbReference type="ChEBI" id="CHEBI:30616"/>
        <label>2</label>
    </ligand>
</feature>
<feature type="binding site" evidence="1">
    <location>
        <position position="820"/>
    </location>
    <ligand>
        <name>ATP</name>
        <dbReference type="ChEBI" id="CHEBI:30616"/>
        <label>2</label>
    </ligand>
</feature>
<feature type="binding site" evidence="1">
    <location>
        <position position="820"/>
    </location>
    <ligand>
        <name>Mg(2+)</name>
        <dbReference type="ChEBI" id="CHEBI:18420"/>
        <label>3</label>
    </ligand>
</feature>
<feature type="binding site" evidence="1">
    <location>
        <position position="820"/>
    </location>
    <ligand>
        <name>Mn(2+)</name>
        <dbReference type="ChEBI" id="CHEBI:29035"/>
        <label>3</label>
    </ligand>
</feature>
<feature type="binding site" evidence="1">
    <location>
        <position position="832"/>
    </location>
    <ligand>
        <name>ATP</name>
        <dbReference type="ChEBI" id="CHEBI:30616"/>
        <label>2</label>
    </ligand>
</feature>
<feature type="binding site" evidence="1">
    <location>
        <position position="832"/>
    </location>
    <ligand>
        <name>Mg(2+)</name>
        <dbReference type="ChEBI" id="CHEBI:18420"/>
        <label>3</label>
    </ligand>
</feature>
<feature type="binding site" evidence="1">
    <location>
        <position position="832"/>
    </location>
    <ligand>
        <name>Mg(2+)</name>
        <dbReference type="ChEBI" id="CHEBI:18420"/>
        <label>4</label>
    </ligand>
</feature>
<feature type="binding site" evidence="1">
    <location>
        <position position="832"/>
    </location>
    <ligand>
        <name>Mn(2+)</name>
        <dbReference type="ChEBI" id="CHEBI:29035"/>
        <label>3</label>
    </ligand>
</feature>
<feature type="binding site" evidence="1">
    <location>
        <position position="832"/>
    </location>
    <ligand>
        <name>Mn(2+)</name>
        <dbReference type="ChEBI" id="CHEBI:29035"/>
        <label>4</label>
    </ligand>
</feature>
<feature type="binding site" evidence="1">
    <location>
        <position position="834"/>
    </location>
    <ligand>
        <name>Mg(2+)</name>
        <dbReference type="ChEBI" id="CHEBI:18420"/>
        <label>4</label>
    </ligand>
</feature>
<feature type="binding site" evidence="1">
    <location>
        <position position="834"/>
    </location>
    <ligand>
        <name>Mn(2+)</name>
        <dbReference type="ChEBI" id="CHEBI:29035"/>
        <label>4</label>
    </ligand>
</feature>
<sequence>MPKRSDIKKIMVIGSGPIIIGQAAEFDYAGTQACLALKEEGYSVVLVNSNPATIMTDKEIADKVYIEPITLEFVTRILRKERPDALLPTLGGQTGLNMAMELSKAGILDELGVELLGTKLSAIDQAEDRDLFKQLMEELEQPIPESEIVNTVEEAVAFATEIGYPVIVRPAFTLGGTGGGMCANEEELREIAENGLKLSPVTQCLIERSIAGFKEIEYEVMRDAEDNALVVCNMENFDPVGIHTGDSIVFAPTQTLSDIENQMLRDASLKIIRALKIEGGCNVQLALDPHSFKYYVIEVNPRVSRSSALASKATGYPIAKLAAKIAVGLTLDEMINPVTGTTYAMFEPALDYVVAKIPRFPFDKFEHGERRLGTQMKATGEVMAIGRNIEESLLKACRSLEIGVYHNEMSELAEVTDDALVEKVVKAQDDRLFYISEAIRRGYTIEELSELTKIDIFFLDKLLHIFELEQELAAHVGDVDVLKEAKRNGFSDRKIADLWNQTANQVRATRLENNIVPVYKMVDTCAAEFESSTPYFYSTYEWENESIKSDKESVIVLGSGPIRIGQGVEFDYATVHSVKAIQAAGYEAIIMNSNPETVSTDFSVSDKLYFEPLTFEDVMNVIELEQPKGVVVQFGGQTAINLAEPLSKAGVKILGTQVADLDRAEDRDLFEQALKDLDIPQPPGQTATNEEEAVEAARKIGFPVLVRPSYVLGGRAMEIVENEDDLRSYMRTAVKASPDHPVLVDSYIIGRECEVDAISDGKDVLIPGIMEHIERAGVHSGDSMAVYPPQTLSKKIQETIADYTKRLAIGLNCIGMMNIQFVIKDETVYVIEVNPRASRTVPFLSKVTDIPMAQVATNLILGKSLAEQGYKDGLYPESNHVHVKAPVFSFTKLAQVDSLLGPEMKSTGEVMGTDVTLEKALYKAFEASYLHLPTFGNVIFTIHDDTKEEALDLARRFDAIGYGIYATEGTAKFLNEHGVHATLVNKLGENDDNDIPALVRTGKAQAIINTVGNKRTYDEDGAAIRSSAIEAGIPLFTALDTADAMVRVLESRSFTTEAI</sequence>
<evidence type="ECO:0000255" key="1">
    <source>
        <dbReference type="HAMAP-Rule" id="MF_01210"/>
    </source>
</evidence>
<keyword id="KW-0028">Amino-acid biosynthesis</keyword>
<keyword id="KW-0055">Arginine biosynthesis</keyword>
<keyword id="KW-0067">ATP-binding</keyword>
<keyword id="KW-0436">Ligase</keyword>
<keyword id="KW-0460">Magnesium</keyword>
<keyword id="KW-0464">Manganese</keyword>
<keyword id="KW-0479">Metal-binding</keyword>
<keyword id="KW-0547">Nucleotide-binding</keyword>
<keyword id="KW-0665">Pyrimidine biosynthesis</keyword>
<keyword id="KW-1185">Reference proteome</keyword>
<keyword id="KW-0677">Repeat</keyword>
<organism>
    <name type="scientific">Streptococcus thermophilus (strain ATCC BAA-250 / LMG 18311)</name>
    <dbReference type="NCBI Taxonomy" id="264199"/>
    <lineage>
        <taxon>Bacteria</taxon>
        <taxon>Bacillati</taxon>
        <taxon>Bacillota</taxon>
        <taxon>Bacilli</taxon>
        <taxon>Lactobacillales</taxon>
        <taxon>Streptococcaceae</taxon>
        <taxon>Streptococcus</taxon>
    </lineage>
</organism>
<reference key="1">
    <citation type="journal article" date="2004" name="Nat. Biotechnol.">
        <title>Complete sequence and comparative genome analysis of the dairy bacterium Streptococcus thermophilus.</title>
        <authorList>
            <person name="Bolotin A."/>
            <person name="Quinquis B."/>
            <person name="Renault P."/>
            <person name="Sorokin A."/>
            <person name="Ehrlich S.D."/>
            <person name="Kulakauskas S."/>
            <person name="Lapidus A."/>
            <person name="Goltsman E."/>
            <person name="Mazur M."/>
            <person name="Pusch G.D."/>
            <person name="Fonstein M."/>
            <person name="Overbeek R."/>
            <person name="Kyprides N."/>
            <person name="Purnelle B."/>
            <person name="Prozzi D."/>
            <person name="Ngui K."/>
            <person name="Masuy D."/>
            <person name="Hancy F."/>
            <person name="Burteau S."/>
            <person name="Boutry M."/>
            <person name="Delcour J."/>
            <person name="Goffeau A."/>
            <person name="Hols P."/>
        </authorList>
    </citation>
    <scope>NUCLEOTIDE SEQUENCE [LARGE SCALE GENOMIC DNA]</scope>
    <source>
        <strain>ATCC BAA-250 / LMG 18311</strain>
    </source>
</reference>
<dbReference type="EC" id="6.3.4.16" evidence="1"/>
<dbReference type="EC" id="6.3.5.5" evidence="1"/>
<dbReference type="EMBL" id="CP000023">
    <property type="protein sequence ID" value="AAV60235.1"/>
    <property type="molecule type" value="Genomic_DNA"/>
</dbReference>
<dbReference type="RefSeq" id="WP_011225627.1">
    <property type="nucleotide sequence ID" value="NC_006448.1"/>
</dbReference>
<dbReference type="SMR" id="Q5M5F6"/>
<dbReference type="STRING" id="264199.stu0527"/>
<dbReference type="GeneID" id="66898430"/>
<dbReference type="KEGG" id="stl:stu0527"/>
<dbReference type="eggNOG" id="COG0458">
    <property type="taxonomic scope" value="Bacteria"/>
</dbReference>
<dbReference type="HOGENOM" id="CLU_000513_1_2_9"/>
<dbReference type="UniPathway" id="UPA00068">
    <property type="reaction ID" value="UER00171"/>
</dbReference>
<dbReference type="UniPathway" id="UPA00070">
    <property type="reaction ID" value="UER00115"/>
</dbReference>
<dbReference type="Proteomes" id="UP000001170">
    <property type="component" value="Chromosome"/>
</dbReference>
<dbReference type="GO" id="GO:0005737">
    <property type="term" value="C:cytoplasm"/>
    <property type="evidence" value="ECO:0007669"/>
    <property type="project" value="TreeGrafter"/>
</dbReference>
<dbReference type="GO" id="GO:0005524">
    <property type="term" value="F:ATP binding"/>
    <property type="evidence" value="ECO:0007669"/>
    <property type="project" value="UniProtKB-UniRule"/>
</dbReference>
<dbReference type="GO" id="GO:0004087">
    <property type="term" value="F:carbamoyl-phosphate synthase (ammonia) activity"/>
    <property type="evidence" value="ECO:0007669"/>
    <property type="project" value="RHEA"/>
</dbReference>
<dbReference type="GO" id="GO:0004088">
    <property type="term" value="F:carbamoyl-phosphate synthase (glutamine-hydrolyzing) activity"/>
    <property type="evidence" value="ECO:0007669"/>
    <property type="project" value="UniProtKB-UniRule"/>
</dbReference>
<dbReference type="GO" id="GO:0046872">
    <property type="term" value="F:metal ion binding"/>
    <property type="evidence" value="ECO:0007669"/>
    <property type="project" value="UniProtKB-KW"/>
</dbReference>
<dbReference type="GO" id="GO:0044205">
    <property type="term" value="P:'de novo' UMP biosynthetic process"/>
    <property type="evidence" value="ECO:0007669"/>
    <property type="project" value="UniProtKB-UniRule"/>
</dbReference>
<dbReference type="GO" id="GO:0006541">
    <property type="term" value="P:glutamine metabolic process"/>
    <property type="evidence" value="ECO:0007669"/>
    <property type="project" value="TreeGrafter"/>
</dbReference>
<dbReference type="GO" id="GO:0006526">
    <property type="term" value="P:L-arginine biosynthetic process"/>
    <property type="evidence" value="ECO:0007669"/>
    <property type="project" value="UniProtKB-UniRule"/>
</dbReference>
<dbReference type="CDD" id="cd01424">
    <property type="entry name" value="MGS_CPS_II"/>
    <property type="match status" value="1"/>
</dbReference>
<dbReference type="FunFam" id="1.10.1030.10:FF:000002">
    <property type="entry name" value="Carbamoyl-phosphate synthase large chain"/>
    <property type="match status" value="1"/>
</dbReference>
<dbReference type="FunFam" id="3.30.1490.20:FF:000001">
    <property type="entry name" value="Carbamoyl-phosphate synthase large chain"/>
    <property type="match status" value="1"/>
</dbReference>
<dbReference type="FunFam" id="3.30.470.20:FF:000001">
    <property type="entry name" value="Carbamoyl-phosphate synthase large chain"/>
    <property type="match status" value="1"/>
</dbReference>
<dbReference type="FunFam" id="3.30.470.20:FF:000026">
    <property type="entry name" value="Carbamoyl-phosphate synthase large chain"/>
    <property type="match status" value="1"/>
</dbReference>
<dbReference type="FunFam" id="3.40.50.20:FF:000001">
    <property type="entry name" value="Carbamoyl-phosphate synthase large chain"/>
    <property type="match status" value="2"/>
</dbReference>
<dbReference type="Gene3D" id="3.40.50.20">
    <property type="match status" value="2"/>
</dbReference>
<dbReference type="Gene3D" id="3.30.470.20">
    <property type="entry name" value="ATP-grasp fold, B domain"/>
    <property type="match status" value="2"/>
</dbReference>
<dbReference type="Gene3D" id="1.10.1030.10">
    <property type="entry name" value="Carbamoyl-phosphate synthetase, large subunit oligomerisation domain"/>
    <property type="match status" value="1"/>
</dbReference>
<dbReference type="Gene3D" id="3.40.50.1380">
    <property type="entry name" value="Methylglyoxal synthase-like domain"/>
    <property type="match status" value="1"/>
</dbReference>
<dbReference type="HAMAP" id="MF_01210_A">
    <property type="entry name" value="CPSase_L_chain_A"/>
    <property type="match status" value="1"/>
</dbReference>
<dbReference type="HAMAP" id="MF_01210_B">
    <property type="entry name" value="CPSase_L_chain_B"/>
    <property type="match status" value="1"/>
</dbReference>
<dbReference type="InterPro" id="IPR011761">
    <property type="entry name" value="ATP-grasp"/>
</dbReference>
<dbReference type="InterPro" id="IPR006275">
    <property type="entry name" value="CarbamoylP_synth_lsu"/>
</dbReference>
<dbReference type="InterPro" id="IPR005480">
    <property type="entry name" value="CarbamoylP_synth_lsu_oligo"/>
</dbReference>
<dbReference type="InterPro" id="IPR036897">
    <property type="entry name" value="CarbamoylP_synth_lsu_oligo_sf"/>
</dbReference>
<dbReference type="InterPro" id="IPR005479">
    <property type="entry name" value="CbamoylP_synth_lsu-like_ATP-bd"/>
</dbReference>
<dbReference type="InterPro" id="IPR005483">
    <property type="entry name" value="CbamoylP_synth_lsu_CPSase_dom"/>
</dbReference>
<dbReference type="InterPro" id="IPR011607">
    <property type="entry name" value="MGS-like_dom"/>
</dbReference>
<dbReference type="InterPro" id="IPR036914">
    <property type="entry name" value="MGS-like_dom_sf"/>
</dbReference>
<dbReference type="InterPro" id="IPR033937">
    <property type="entry name" value="MGS_CPS_CarB"/>
</dbReference>
<dbReference type="InterPro" id="IPR016185">
    <property type="entry name" value="PreATP-grasp_dom_sf"/>
</dbReference>
<dbReference type="NCBIfam" id="TIGR01369">
    <property type="entry name" value="CPSaseII_lrg"/>
    <property type="match status" value="1"/>
</dbReference>
<dbReference type="NCBIfam" id="NF003671">
    <property type="entry name" value="PRK05294.1"/>
    <property type="match status" value="1"/>
</dbReference>
<dbReference type="NCBIfam" id="NF009455">
    <property type="entry name" value="PRK12815.1"/>
    <property type="match status" value="1"/>
</dbReference>
<dbReference type="PANTHER" id="PTHR11405:SF53">
    <property type="entry name" value="CARBAMOYL-PHOSPHATE SYNTHASE [AMMONIA], MITOCHONDRIAL"/>
    <property type="match status" value="1"/>
</dbReference>
<dbReference type="PANTHER" id="PTHR11405">
    <property type="entry name" value="CARBAMOYLTRANSFERASE FAMILY MEMBER"/>
    <property type="match status" value="1"/>
</dbReference>
<dbReference type="Pfam" id="PF02786">
    <property type="entry name" value="CPSase_L_D2"/>
    <property type="match status" value="2"/>
</dbReference>
<dbReference type="Pfam" id="PF02787">
    <property type="entry name" value="CPSase_L_D3"/>
    <property type="match status" value="1"/>
</dbReference>
<dbReference type="Pfam" id="PF02142">
    <property type="entry name" value="MGS"/>
    <property type="match status" value="1"/>
</dbReference>
<dbReference type="PRINTS" id="PR00098">
    <property type="entry name" value="CPSASE"/>
</dbReference>
<dbReference type="SMART" id="SM01096">
    <property type="entry name" value="CPSase_L_D3"/>
    <property type="match status" value="1"/>
</dbReference>
<dbReference type="SMART" id="SM01209">
    <property type="entry name" value="GARS_A"/>
    <property type="match status" value="1"/>
</dbReference>
<dbReference type="SMART" id="SM00851">
    <property type="entry name" value="MGS"/>
    <property type="match status" value="1"/>
</dbReference>
<dbReference type="SUPFAM" id="SSF48108">
    <property type="entry name" value="Carbamoyl phosphate synthetase, large subunit connection domain"/>
    <property type="match status" value="1"/>
</dbReference>
<dbReference type="SUPFAM" id="SSF56059">
    <property type="entry name" value="Glutathione synthetase ATP-binding domain-like"/>
    <property type="match status" value="2"/>
</dbReference>
<dbReference type="SUPFAM" id="SSF52335">
    <property type="entry name" value="Methylglyoxal synthase-like"/>
    <property type="match status" value="1"/>
</dbReference>
<dbReference type="SUPFAM" id="SSF52440">
    <property type="entry name" value="PreATP-grasp domain"/>
    <property type="match status" value="2"/>
</dbReference>
<dbReference type="PROSITE" id="PS50975">
    <property type="entry name" value="ATP_GRASP"/>
    <property type="match status" value="2"/>
</dbReference>
<dbReference type="PROSITE" id="PS00866">
    <property type="entry name" value="CPSASE_1"/>
    <property type="match status" value="2"/>
</dbReference>
<dbReference type="PROSITE" id="PS00867">
    <property type="entry name" value="CPSASE_2"/>
    <property type="match status" value="2"/>
</dbReference>
<dbReference type="PROSITE" id="PS51855">
    <property type="entry name" value="MGS"/>
    <property type="match status" value="1"/>
</dbReference>
<protein>
    <recommendedName>
        <fullName evidence="1">Carbamoyl phosphate synthase large chain</fullName>
        <ecNumber evidence="1">6.3.4.16</ecNumber>
        <ecNumber evidence="1">6.3.5.5</ecNumber>
    </recommendedName>
    <alternativeName>
        <fullName evidence="1">Carbamoyl phosphate synthetase ammonia chain</fullName>
    </alternativeName>
</protein>
<proteinExistence type="inferred from homology"/>
<name>CARB_STRT2</name>
<gene>
    <name evidence="1" type="primary">carB</name>
    <name type="ordered locus">stu0527</name>
</gene>
<comment type="function">
    <text evidence="1">Large subunit of the glutamine-dependent carbamoyl phosphate synthetase (CPSase). CPSase catalyzes the formation of carbamoyl phosphate from the ammonia moiety of glutamine, carbonate, and phosphate donated by ATP, constituting the first step of 2 biosynthetic pathways, one leading to arginine and/or urea and the other to pyrimidine nucleotides. The large subunit (synthetase) binds the substrates ammonia (free or transferred from glutamine from the small subunit), hydrogencarbonate and ATP and carries out an ATP-coupled ligase reaction, activating hydrogencarbonate by forming carboxy phosphate which reacts with ammonia to form carbamoyl phosphate.</text>
</comment>
<comment type="catalytic activity">
    <reaction evidence="1">
        <text>hydrogencarbonate + L-glutamine + 2 ATP + H2O = carbamoyl phosphate + L-glutamate + 2 ADP + phosphate + 2 H(+)</text>
        <dbReference type="Rhea" id="RHEA:18633"/>
        <dbReference type="ChEBI" id="CHEBI:15377"/>
        <dbReference type="ChEBI" id="CHEBI:15378"/>
        <dbReference type="ChEBI" id="CHEBI:17544"/>
        <dbReference type="ChEBI" id="CHEBI:29985"/>
        <dbReference type="ChEBI" id="CHEBI:30616"/>
        <dbReference type="ChEBI" id="CHEBI:43474"/>
        <dbReference type="ChEBI" id="CHEBI:58228"/>
        <dbReference type="ChEBI" id="CHEBI:58359"/>
        <dbReference type="ChEBI" id="CHEBI:456216"/>
        <dbReference type="EC" id="6.3.5.5"/>
    </reaction>
</comment>
<comment type="catalytic activity">
    <molecule>Carbamoyl phosphate synthase large chain</molecule>
    <reaction evidence="1">
        <text>hydrogencarbonate + NH4(+) + 2 ATP = carbamoyl phosphate + 2 ADP + phosphate + 2 H(+)</text>
        <dbReference type="Rhea" id="RHEA:18029"/>
        <dbReference type="ChEBI" id="CHEBI:15378"/>
        <dbReference type="ChEBI" id="CHEBI:17544"/>
        <dbReference type="ChEBI" id="CHEBI:28938"/>
        <dbReference type="ChEBI" id="CHEBI:30616"/>
        <dbReference type="ChEBI" id="CHEBI:43474"/>
        <dbReference type="ChEBI" id="CHEBI:58228"/>
        <dbReference type="ChEBI" id="CHEBI:456216"/>
        <dbReference type="EC" id="6.3.4.16"/>
    </reaction>
</comment>
<comment type="cofactor">
    <cofactor evidence="1">
        <name>Mg(2+)</name>
        <dbReference type="ChEBI" id="CHEBI:18420"/>
    </cofactor>
    <cofactor evidence="1">
        <name>Mn(2+)</name>
        <dbReference type="ChEBI" id="CHEBI:29035"/>
    </cofactor>
    <text evidence="1">Binds 4 Mg(2+) or Mn(2+) ions per subunit.</text>
</comment>
<comment type="pathway">
    <text evidence="1">Amino-acid biosynthesis; L-arginine biosynthesis; carbamoyl phosphate from bicarbonate: step 1/1.</text>
</comment>
<comment type="pathway">
    <text evidence="1">Pyrimidine metabolism; UMP biosynthesis via de novo pathway; (S)-dihydroorotate from bicarbonate: step 1/3.</text>
</comment>
<comment type="subunit">
    <text evidence="1">Composed of two chains; the small (or glutamine) chain promotes the hydrolysis of glutamine to ammonia, which is used by the large (or ammonia) chain to synthesize carbamoyl phosphate. Tetramer of heterodimers (alpha,beta)4.</text>
</comment>
<comment type="domain">
    <text evidence="1">The large subunit is composed of 2 ATP-grasp domains that are involved in binding the 2 ATP molecules needed for carbamoyl phosphate synthesis. The N-terminal ATP-grasp domain (referred to as the carboxyphosphate synthetic component) catalyzes the ATP-dependent phosphorylation of hydrogencarbonate to carboxyphosphate and the subsequent nucleophilic attack by ammonia to form a carbamate intermediate. The C-terminal ATP-grasp domain (referred to as the carbamoyl phosphate synthetic component) then catalyzes the phosphorylation of carbamate with the second ATP to form the end product carbamoyl phosphate. The reactive and unstable enzyme intermediates are sequentially channeled from one active site to the next through the interior of the protein over a distance of at least 96 A.</text>
</comment>
<comment type="similarity">
    <text evidence="1">Belongs to the CarB family.</text>
</comment>
<accession>Q5M5F6</accession>